<name>VLDH_STRHL</name>
<sequence length="213" mass="22796">MYKVALFDLDGTLINSEHKNREAWARLFRRHGVPYDDSVLRSFTGRPAKEAMADHVASFAGHSVDELCAEVAAYAALPDMPAAVTVDGAMELLHQLQQMRVPLGVVTSGPRDYAESALTTLGALQLLDVLITADDVSRGKPDPEGYSTACSALNVEPSQAIVFEDAPAGILAAKRAGIFCVGLTTTHDAEALAEADVLLKDLTEVRWPHIGPS</sequence>
<gene>
    <name evidence="6" type="primary">vldH</name>
    <name evidence="10" type="ORF">SHL15_8003</name>
</gene>
<protein>
    <recommendedName>
        <fullName evidence="7">Validoxylamine A 7'-phosphate phosphatase</fullName>
        <ecNumber evidence="5">3.1.3.101</ecNumber>
    </recommendedName>
    <alternativeName>
        <fullName evidence="6">Phosphomutase</fullName>
    </alternativeName>
</protein>
<evidence type="ECO:0000250" key="1">
    <source>
        <dbReference type="UniProtKB" id="P77247"/>
    </source>
</evidence>
<evidence type="ECO:0000250" key="2">
    <source>
        <dbReference type="UniProtKB" id="P77625"/>
    </source>
</evidence>
<evidence type="ECO:0000250" key="3">
    <source>
        <dbReference type="UniProtKB" id="Q8CHP8"/>
    </source>
</evidence>
<evidence type="ECO:0000269" key="4">
    <source>
    </source>
</evidence>
<evidence type="ECO:0000269" key="5">
    <source>
    </source>
</evidence>
<evidence type="ECO:0000303" key="6">
    <source>
    </source>
</evidence>
<evidence type="ECO:0000303" key="7">
    <source>
    </source>
</evidence>
<evidence type="ECO:0000305" key="8"/>
<evidence type="ECO:0000312" key="9">
    <source>
        <dbReference type="EMBL" id="ABC67272.1"/>
    </source>
</evidence>
<evidence type="ECO:0000312" key="10">
    <source>
        <dbReference type="EMBL" id="ALO98980.1"/>
    </source>
</evidence>
<organism>
    <name type="scientific">Streptomyces hygroscopicus subsp. limoneus</name>
    <dbReference type="NCBI Taxonomy" id="264445"/>
    <lineage>
        <taxon>Bacteria</taxon>
        <taxon>Bacillati</taxon>
        <taxon>Actinomycetota</taxon>
        <taxon>Actinomycetes</taxon>
        <taxon>Kitasatosporales</taxon>
        <taxon>Streptomycetaceae</taxon>
        <taxon>Streptomyces</taxon>
        <taxon>Streptomyces violaceusniger group</taxon>
    </lineage>
</organism>
<proteinExistence type="evidence at protein level"/>
<accession>Q15JF8</accession>
<reference key="1">
    <citation type="journal article" date="2006" name="Gene">
        <title>Genetic localization and heterologous expression of validamycin biosynthetic gene cluster isolated from Streptomyces hygroscopicus var. limoneus KCCM 11405 (IFO 12704).</title>
        <authorList>
            <person name="Singh D."/>
            <person name="Seo M.J."/>
            <person name="Kwon H.J."/>
            <person name="Rajkarnikar A."/>
            <person name="Kim K.R."/>
            <person name="Kim S.O."/>
            <person name="Suh J.W."/>
        </authorList>
    </citation>
    <scope>NUCLEOTIDE SEQUENCE [GENOMIC DNA]</scope>
    <scope>FUNCTION</scope>
    <source>
        <strain evidence="9">ATCC 21432 / NBRC 12704 / KCTC 1717 / KCCM 11405</strain>
    </source>
</reference>
<reference key="2">
    <citation type="submission" date="2015-11" db="EMBL/GenBank/DDBJ databases">
        <authorList>
            <person name="Kim K.M."/>
        </authorList>
    </citation>
    <scope>NUCLEOTIDE SEQUENCE [LARGE SCALE GENOMIC DNA]</scope>
    <source>
        <strain>ATCC 21432 / NBRC 12704 / KCTC 1717 / KCCM 11405</strain>
    </source>
</reference>
<reference key="3">
    <citation type="journal article" date="2011" name="J. Am. Chem. Soc.">
        <title>Pseudoglycosyltransferase catalyzes nonglycosidic C-N coupling in validamycin a biosynthesis.</title>
        <authorList>
            <person name="Asamizu S."/>
            <person name="Yang J."/>
            <person name="Almabruk K.H."/>
            <person name="Mahmud T."/>
        </authorList>
    </citation>
    <scope>FUNCTION</scope>
    <scope>CATALYTIC ACTIVITY</scope>
    <scope>SUBSTRATE SPECIFICITY</scope>
    <source>
        <strain>ATCC 21432 / NBRC 12704 / KCTC 1717 / KCCM 11405</strain>
    </source>
</reference>
<feature type="chain" id="PRO_0000442791" description="Validoxylamine A 7'-phosphate phosphatase">
    <location>
        <begin position="1"/>
        <end position="213"/>
    </location>
</feature>
<feature type="active site" description="Nucleophile" evidence="3">
    <location>
        <position position="8"/>
    </location>
</feature>
<feature type="active site" description="Proton donor" evidence="3">
    <location>
        <position position="10"/>
    </location>
</feature>
<feature type="binding site" evidence="1">
    <location>
        <begin position="8"/>
        <end position="10"/>
    </location>
    <ligand>
        <name>substrate</name>
    </ligand>
</feature>
<feature type="binding site" evidence="1">
    <location>
        <position position="8"/>
    </location>
    <ligand>
        <name>a divalent metal cation</name>
        <dbReference type="ChEBI" id="CHEBI:60240"/>
    </ligand>
</feature>
<feature type="binding site" evidence="1">
    <location>
        <position position="10"/>
    </location>
    <ligand>
        <name>a divalent metal cation</name>
        <dbReference type="ChEBI" id="CHEBI:60240"/>
    </ligand>
</feature>
<feature type="binding site" evidence="1">
    <location>
        <begin position="107"/>
        <end position="108"/>
    </location>
    <ligand>
        <name>substrate</name>
    </ligand>
</feature>
<feature type="binding site" evidence="1">
    <location>
        <position position="140"/>
    </location>
    <ligand>
        <name>substrate</name>
    </ligand>
</feature>
<feature type="binding site" evidence="1">
    <location>
        <position position="165"/>
    </location>
    <ligand>
        <name>a divalent metal cation</name>
        <dbReference type="ChEBI" id="CHEBI:60240"/>
    </ligand>
</feature>
<dbReference type="EC" id="3.1.3.101" evidence="5"/>
<dbReference type="EMBL" id="DQ223652">
    <property type="protein sequence ID" value="ABC67272.1"/>
    <property type="molecule type" value="Genomic_DNA"/>
</dbReference>
<dbReference type="EMBL" id="CP013220">
    <property type="protein sequence ID" value="ALO98980.1"/>
    <property type="molecule type" value="Genomic_DNA"/>
</dbReference>
<dbReference type="SMR" id="Q15JF8"/>
<dbReference type="BioCyc" id="MetaCyc:MONOMER-19690"/>
<dbReference type="BRENDA" id="3.1.3.101">
    <property type="organism ID" value="14504"/>
</dbReference>
<dbReference type="GO" id="GO:0046872">
    <property type="term" value="F:metal ion binding"/>
    <property type="evidence" value="ECO:0007669"/>
    <property type="project" value="UniProtKB-KW"/>
</dbReference>
<dbReference type="GO" id="GO:0050308">
    <property type="term" value="F:sugar-phosphatase activity"/>
    <property type="evidence" value="ECO:0007669"/>
    <property type="project" value="TreeGrafter"/>
</dbReference>
<dbReference type="GO" id="GO:0017000">
    <property type="term" value="P:antibiotic biosynthetic process"/>
    <property type="evidence" value="ECO:0007669"/>
    <property type="project" value="UniProtKB-KW"/>
</dbReference>
<dbReference type="Gene3D" id="3.40.50.1000">
    <property type="entry name" value="HAD superfamily/HAD-like"/>
    <property type="match status" value="1"/>
</dbReference>
<dbReference type="Gene3D" id="1.10.150.240">
    <property type="entry name" value="Putative phosphatase, domain 2"/>
    <property type="match status" value="1"/>
</dbReference>
<dbReference type="InterPro" id="IPR036412">
    <property type="entry name" value="HAD-like_sf"/>
</dbReference>
<dbReference type="InterPro" id="IPR051806">
    <property type="entry name" value="HAD-like_SPP"/>
</dbReference>
<dbReference type="InterPro" id="IPR006439">
    <property type="entry name" value="HAD-SF_hydro_IA"/>
</dbReference>
<dbReference type="InterPro" id="IPR041492">
    <property type="entry name" value="HAD_2"/>
</dbReference>
<dbReference type="InterPro" id="IPR023214">
    <property type="entry name" value="HAD_sf"/>
</dbReference>
<dbReference type="InterPro" id="IPR023198">
    <property type="entry name" value="PGP-like_dom2"/>
</dbReference>
<dbReference type="NCBIfam" id="TIGR01509">
    <property type="entry name" value="HAD-SF-IA-v3"/>
    <property type="match status" value="1"/>
</dbReference>
<dbReference type="PANTHER" id="PTHR43481">
    <property type="entry name" value="FRUCTOSE-1-PHOSPHATE PHOSPHATASE"/>
    <property type="match status" value="1"/>
</dbReference>
<dbReference type="PANTHER" id="PTHR43481:SF4">
    <property type="entry name" value="GLYCEROL-1-PHOSPHATE PHOSPHOHYDROLASE 1-RELATED"/>
    <property type="match status" value="1"/>
</dbReference>
<dbReference type="Pfam" id="PF13419">
    <property type="entry name" value="HAD_2"/>
    <property type="match status" value="1"/>
</dbReference>
<dbReference type="PRINTS" id="PR00413">
    <property type="entry name" value="HADHALOGNASE"/>
</dbReference>
<dbReference type="SFLD" id="SFLDG01135">
    <property type="entry name" value="C1.5.6:_HAD__Beta-PGM__Phospha"/>
    <property type="match status" value="1"/>
</dbReference>
<dbReference type="SFLD" id="SFLDG01129">
    <property type="entry name" value="C1.5:_HAD__Beta-PGM__Phosphata"/>
    <property type="match status" value="1"/>
</dbReference>
<dbReference type="SUPFAM" id="SSF56784">
    <property type="entry name" value="HAD-like"/>
    <property type="match status" value="1"/>
</dbReference>
<comment type="function">
    <text evidence="4 5">Involved in the biosynthesis of the antifungal agent validamycin A (PubMed:16725283). Catalyzes the dephosphorylation of validoxylamine A 7'-phosphate to yield validoxylamine A (PubMed:21766819). VldH is also able to convert trehalose 6-phosphate to trehalose (PubMed:21766819).</text>
</comment>
<comment type="catalytic activity">
    <reaction evidence="5">
        <text>validoxylamine A 7'-phosphate + H2O = validoxylamine A + phosphate</text>
        <dbReference type="Rhea" id="RHEA:49400"/>
        <dbReference type="ChEBI" id="CHEBI:15377"/>
        <dbReference type="ChEBI" id="CHEBI:43474"/>
        <dbReference type="ChEBI" id="CHEBI:111504"/>
        <dbReference type="ChEBI" id="CHEBI:111505"/>
        <dbReference type="EC" id="3.1.3.101"/>
    </reaction>
</comment>
<comment type="cofactor">
    <cofactor evidence="2">
        <name>Mg(2+)</name>
        <dbReference type="ChEBI" id="CHEBI:18420"/>
    </cofactor>
    <cofactor evidence="2">
        <name>Mn(2+)</name>
        <dbReference type="ChEBI" id="CHEBI:29035"/>
    </cofactor>
    <cofactor evidence="2">
        <name>Co(2+)</name>
        <dbReference type="ChEBI" id="CHEBI:48828"/>
    </cofactor>
    <text evidence="2">Requires the presence of a divalent metal cation for activity. Can use magnesium, manganese or cobalt.</text>
</comment>
<comment type="similarity">
    <text evidence="8">Belongs to the HAD-like hydrolase superfamily. CbbY/CbbZ/Gph/YieH family.</text>
</comment>
<keyword id="KW-0045">Antibiotic biosynthesis</keyword>
<keyword id="KW-0170">Cobalt</keyword>
<keyword id="KW-0378">Hydrolase</keyword>
<keyword id="KW-0460">Magnesium</keyword>
<keyword id="KW-0464">Manganese</keyword>
<keyword id="KW-0479">Metal-binding</keyword>